<proteinExistence type="inferred from homology"/>
<evidence type="ECO:0000250" key="1"/>
<evidence type="ECO:0000256" key="2">
    <source>
        <dbReference type="SAM" id="MobiDB-lite"/>
    </source>
</evidence>
<evidence type="ECO:0000305" key="3"/>
<feature type="chain" id="PRO_0000330211" description="Histone H2A.Z-specific chaperone CHZ1">
    <location>
        <begin position="1"/>
        <end position="172"/>
    </location>
</feature>
<feature type="region of interest" description="Disordered" evidence="2">
    <location>
        <begin position="1"/>
        <end position="172"/>
    </location>
</feature>
<feature type="compositionally biased region" description="Basic and acidic residues" evidence="2">
    <location>
        <begin position="1"/>
        <end position="10"/>
    </location>
</feature>
<feature type="compositionally biased region" description="Basic and acidic residues" evidence="2">
    <location>
        <begin position="54"/>
        <end position="68"/>
    </location>
</feature>
<feature type="compositionally biased region" description="Acidic residues" evidence="2">
    <location>
        <begin position="78"/>
        <end position="88"/>
    </location>
</feature>
<feature type="compositionally biased region" description="Acidic residues" evidence="2">
    <location>
        <begin position="96"/>
        <end position="105"/>
    </location>
</feature>
<feature type="compositionally biased region" description="Basic and acidic residues" evidence="2">
    <location>
        <begin position="121"/>
        <end position="139"/>
    </location>
</feature>
<feature type="compositionally biased region" description="Acidic residues" evidence="2">
    <location>
        <begin position="140"/>
        <end position="155"/>
    </location>
</feature>
<feature type="compositionally biased region" description="Pro residues" evidence="2">
    <location>
        <begin position="160"/>
        <end position="172"/>
    </location>
</feature>
<protein>
    <recommendedName>
        <fullName>Histone H2A.Z-specific chaperone CHZ1</fullName>
    </recommendedName>
</protein>
<reference key="1">
    <citation type="journal article" date="2004" name="Nature">
        <title>Genome evolution in yeasts.</title>
        <authorList>
            <person name="Dujon B."/>
            <person name="Sherman D."/>
            <person name="Fischer G."/>
            <person name="Durrens P."/>
            <person name="Casaregola S."/>
            <person name="Lafontaine I."/>
            <person name="de Montigny J."/>
            <person name="Marck C."/>
            <person name="Neuveglise C."/>
            <person name="Talla E."/>
            <person name="Goffard N."/>
            <person name="Frangeul L."/>
            <person name="Aigle M."/>
            <person name="Anthouard V."/>
            <person name="Babour A."/>
            <person name="Barbe V."/>
            <person name="Barnay S."/>
            <person name="Blanchin S."/>
            <person name="Beckerich J.-M."/>
            <person name="Beyne E."/>
            <person name="Bleykasten C."/>
            <person name="Boisrame A."/>
            <person name="Boyer J."/>
            <person name="Cattolico L."/>
            <person name="Confanioleri F."/>
            <person name="de Daruvar A."/>
            <person name="Despons L."/>
            <person name="Fabre E."/>
            <person name="Fairhead C."/>
            <person name="Ferry-Dumazet H."/>
            <person name="Groppi A."/>
            <person name="Hantraye F."/>
            <person name="Hennequin C."/>
            <person name="Jauniaux N."/>
            <person name="Joyet P."/>
            <person name="Kachouri R."/>
            <person name="Kerrest A."/>
            <person name="Koszul R."/>
            <person name="Lemaire M."/>
            <person name="Lesur I."/>
            <person name="Ma L."/>
            <person name="Muller H."/>
            <person name="Nicaud J.-M."/>
            <person name="Nikolski M."/>
            <person name="Oztas S."/>
            <person name="Ozier-Kalogeropoulos O."/>
            <person name="Pellenz S."/>
            <person name="Potier S."/>
            <person name="Richard G.-F."/>
            <person name="Straub M.-L."/>
            <person name="Suleau A."/>
            <person name="Swennen D."/>
            <person name="Tekaia F."/>
            <person name="Wesolowski-Louvel M."/>
            <person name="Westhof E."/>
            <person name="Wirth B."/>
            <person name="Zeniou-Meyer M."/>
            <person name="Zivanovic Y."/>
            <person name="Bolotin-Fukuhara M."/>
            <person name="Thierry A."/>
            <person name="Bouchier C."/>
            <person name="Caudron B."/>
            <person name="Scarpelli C."/>
            <person name="Gaillardin C."/>
            <person name="Weissenbach J."/>
            <person name="Wincker P."/>
            <person name="Souciet J.-L."/>
        </authorList>
    </citation>
    <scope>NUCLEOTIDE SEQUENCE [LARGE SCALE GENOMIC DNA]</scope>
    <source>
        <strain>ATCC 8585 / CBS 2359 / DSM 70799 / NBRC 1267 / NRRL Y-1140 / WM37</strain>
    </source>
</reference>
<comment type="function">
    <text evidence="1">Forms a chaperone-bound H2A.Z-H2B complex that acts as a source for SWR1 complex-dependent H2A to H2A.Z histone replacement in chromatin.</text>
</comment>
<comment type="subunit">
    <text evidence="1">Forms a heterotrimer with H2A.Z-H2B, stabilizing the association of the histone dimer. Also, with a lower affinity, forms a heterotrimer with H2A-H2B (By similarity).</text>
</comment>
<comment type="subcellular location">
    <subcellularLocation>
        <location evidence="1">Nucleus</location>
    </subcellularLocation>
</comment>
<comment type="similarity">
    <text evidence="3">Belongs to the CHZ1 family.</text>
</comment>
<dbReference type="EMBL" id="CR382122">
    <property type="protein sequence ID" value="CAH01952.1"/>
    <property type="molecule type" value="Genomic_DNA"/>
</dbReference>
<dbReference type="RefSeq" id="XP_451559.1">
    <property type="nucleotide sequence ID" value="XM_451559.1"/>
</dbReference>
<dbReference type="SMR" id="Q6CWY0"/>
<dbReference type="STRING" id="284590.Q6CWY0"/>
<dbReference type="PaxDb" id="284590-Q6CWY0"/>
<dbReference type="KEGG" id="kla:KLLA0_B00649g"/>
<dbReference type="eggNOG" id="ENOG502SCUM">
    <property type="taxonomic scope" value="Eukaryota"/>
</dbReference>
<dbReference type="HOGENOM" id="CLU_126134_0_0_1"/>
<dbReference type="InParanoid" id="Q6CWY0"/>
<dbReference type="OMA" id="RTHYDDE"/>
<dbReference type="Proteomes" id="UP000000598">
    <property type="component" value="Chromosome B"/>
</dbReference>
<dbReference type="GO" id="GO:0005634">
    <property type="term" value="C:nucleus"/>
    <property type="evidence" value="ECO:0007669"/>
    <property type="project" value="UniProtKB-SubCell"/>
</dbReference>
<dbReference type="InterPro" id="IPR019098">
    <property type="entry name" value="Histone_chaperone_domain_CHZ"/>
</dbReference>
<dbReference type="Pfam" id="PF09649">
    <property type="entry name" value="CHZ"/>
    <property type="match status" value="1"/>
</dbReference>
<dbReference type="SMART" id="SM01082">
    <property type="entry name" value="CHZ"/>
    <property type="match status" value="1"/>
</dbReference>
<keyword id="KW-0143">Chaperone</keyword>
<keyword id="KW-0539">Nucleus</keyword>
<keyword id="KW-1185">Reference proteome</keyword>
<organism>
    <name type="scientific">Kluyveromyces lactis (strain ATCC 8585 / CBS 2359 / DSM 70799 / NBRC 1267 / NRRL Y-1140 / WM37)</name>
    <name type="common">Yeast</name>
    <name type="synonym">Candida sphaerica</name>
    <dbReference type="NCBI Taxonomy" id="284590"/>
    <lineage>
        <taxon>Eukaryota</taxon>
        <taxon>Fungi</taxon>
        <taxon>Dikarya</taxon>
        <taxon>Ascomycota</taxon>
        <taxon>Saccharomycotina</taxon>
        <taxon>Saccharomycetes</taxon>
        <taxon>Saccharomycetales</taxon>
        <taxon>Saccharomycetaceae</taxon>
        <taxon>Kluyveromyces</taxon>
    </lineage>
</organism>
<gene>
    <name type="primary">CHZ1</name>
    <name type="ordered locus">KLLA0B00649g</name>
</gene>
<accession>Q6CWY0</accession>
<name>CHZ1_KLULA</name>
<sequence>MAEEIKDKQEFQIGAEEPDSSNVASQAKRSAESELASTADANDKKSKKKRRRRNYDDLDEKIAQEDKASATSGANKEEDSESEVDDEKLDQMMVKEDEEEDDLSEIDSSNIITTGRRTRGKIIDYKKTAEKLEKNGEVGKDDDDDEDDEENDEEFKDPAAPAPAPASPTEPK</sequence>